<proteinExistence type="evidence at transcript level"/>
<reference key="1">
    <citation type="journal article" date="1999" name="Nature">
        <title>Sequence and analysis of chromosome 2 of the plant Arabidopsis thaliana.</title>
        <authorList>
            <person name="Lin X."/>
            <person name="Kaul S."/>
            <person name="Rounsley S.D."/>
            <person name="Shea T.P."/>
            <person name="Benito M.-I."/>
            <person name="Town C.D."/>
            <person name="Fujii C.Y."/>
            <person name="Mason T.M."/>
            <person name="Bowman C.L."/>
            <person name="Barnstead M.E."/>
            <person name="Feldblyum T.V."/>
            <person name="Buell C.R."/>
            <person name="Ketchum K.A."/>
            <person name="Lee J.J."/>
            <person name="Ronning C.M."/>
            <person name="Koo H.L."/>
            <person name="Moffat K.S."/>
            <person name="Cronin L.A."/>
            <person name="Shen M."/>
            <person name="Pai G."/>
            <person name="Van Aken S."/>
            <person name="Umayam L."/>
            <person name="Tallon L.J."/>
            <person name="Gill J.E."/>
            <person name="Adams M.D."/>
            <person name="Carrera A.J."/>
            <person name="Creasy T.H."/>
            <person name="Goodman H.M."/>
            <person name="Somerville C.R."/>
            <person name="Copenhaver G.P."/>
            <person name="Preuss D."/>
            <person name="Nierman W.C."/>
            <person name="White O."/>
            <person name="Eisen J.A."/>
            <person name="Salzberg S.L."/>
            <person name="Fraser C.M."/>
            <person name="Venter J.C."/>
        </authorList>
    </citation>
    <scope>NUCLEOTIDE SEQUENCE [LARGE SCALE GENOMIC DNA]</scope>
    <source>
        <strain>cv. Columbia</strain>
    </source>
</reference>
<reference key="2">
    <citation type="journal article" date="2017" name="Plant J.">
        <title>Araport11: a complete reannotation of the Arabidopsis thaliana reference genome.</title>
        <authorList>
            <person name="Cheng C.Y."/>
            <person name="Krishnakumar V."/>
            <person name="Chan A.P."/>
            <person name="Thibaud-Nissen F."/>
            <person name="Schobel S."/>
            <person name="Town C.D."/>
        </authorList>
    </citation>
    <scope>GENOME REANNOTATION</scope>
    <source>
        <strain>cv. Columbia</strain>
    </source>
</reference>
<reference key="3">
    <citation type="submission" date="2004-09" db="EMBL/GenBank/DDBJ databases">
        <title>Large-scale analysis of RIKEN Arabidopsis full-length (RAFL) cDNAs.</title>
        <authorList>
            <person name="Totoki Y."/>
            <person name="Seki M."/>
            <person name="Ishida J."/>
            <person name="Nakajima M."/>
            <person name="Enju A."/>
            <person name="Kamiya A."/>
            <person name="Narusaka M."/>
            <person name="Shin-i T."/>
            <person name="Nakagawa M."/>
            <person name="Sakamoto N."/>
            <person name="Oishi K."/>
            <person name="Kohara Y."/>
            <person name="Kobayashi M."/>
            <person name="Toyoda A."/>
            <person name="Sakaki Y."/>
            <person name="Sakurai T."/>
            <person name="Iida K."/>
            <person name="Akiyama K."/>
            <person name="Satou M."/>
            <person name="Toyoda T."/>
            <person name="Konagaya A."/>
            <person name="Carninci P."/>
            <person name="Kawai J."/>
            <person name="Hayashizaki Y."/>
            <person name="Shinozaki K."/>
        </authorList>
    </citation>
    <scope>NUCLEOTIDE SEQUENCE [LARGE SCALE MRNA]</scope>
    <source>
        <strain>cv. Columbia</strain>
    </source>
</reference>
<reference key="4">
    <citation type="journal article" date="2004" name="J. Mol. Evol.">
        <title>Phylogenetic analysis of the plant endo-beta-1,4-glucanase gene family.</title>
        <authorList>
            <person name="Libertini E."/>
            <person name="Li Y."/>
            <person name="McQueen-Mason S.J."/>
        </authorList>
    </citation>
    <scope>GENE FAMILY</scope>
</reference>
<comment type="catalytic activity">
    <reaction>
        <text>Endohydrolysis of (1-&gt;4)-beta-D-glucosidic linkages in cellulose, lichenin and cereal beta-D-glucans.</text>
        <dbReference type="EC" id="3.2.1.4"/>
    </reaction>
</comment>
<comment type="subcellular location">
    <subcellularLocation>
        <location evidence="1">Secreted</location>
    </subcellularLocation>
</comment>
<comment type="similarity">
    <text evidence="4 5">Belongs to the glycosyl hydrolase 9 (cellulase E) family.</text>
</comment>
<comment type="sequence caution" evidence="5">
    <conflict type="erroneous gene model prediction">
        <sequence resource="EMBL-CDS" id="AAM14961"/>
    </conflict>
</comment>
<gene>
    <name type="ordered locus">At2g44560</name>
    <name type="ORF">F16B22.5</name>
    <name type="ORF">F4I1.39</name>
</gene>
<evidence type="ECO:0000250" key="1"/>
<evidence type="ECO:0000255" key="2"/>
<evidence type="ECO:0000255" key="3">
    <source>
        <dbReference type="PROSITE-ProRule" id="PRU10059"/>
    </source>
</evidence>
<evidence type="ECO:0000255" key="4">
    <source>
        <dbReference type="PROSITE-ProRule" id="PRU10140"/>
    </source>
</evidence>
<evidence type="ECO:0000305" key="5"/>
<organism>
    <name type="scientific">Arabidopsis thaliana</name>
    <name type="common">Mouse-ear cress</name>
    <dbReference type="NCBI Taxonomy" id="3702"/>
    <lineage>
        <taxon>Eukaryota</taxon>
        <taxon>Viridiplantae</taxon>
        <taxon>Streptophyta</taxon>
        <taxon>Embryophyta</taxon>
        <taxon>Tracheophyta</taxon>
        <taxon>Spermatophyta</taxon>
        <taxon>Magnoliopsida</taxon>
        <taxon>eudicotyledons</taxon>
        <taxon>Gunneridae</taxon>
        <taxon>Pentapetalae</taxon>
        <taxon>rosids</taxon>
        <taxon>malvids</taxon>
        <taxon>Brassicales</taxon>
        <taxon>Brassicaceae</taxon>
        <taxon>Camelineae</taxon>
        <taxon>Arabidopsis</taxon>
    </lineage>
</organism>
<keyword id="KW-0119">Carbohydrate metabolism</keyword>
<keyword id="KW-0961">Cell wall biogenesis/degradation</keyword>
<keyword id="KW-0136">Cellulose degradation</keyword>
<keyword id="KW-0325">Glycoprotein</keyword>
<keyword id="KW-0326">Glycosidase</keyword>
<keyword id="KW-0378">Hydrolase</keyword>
<keyword id="KW-0624">Polysaccharide degradation</keyword>
<keyword id="KW-1185">Reference proteome</keyword>
<keyword id="KW-0964">Secreted</keyword>
<keyword id="KW-0732">Signal</keyword>
<dbReference type="EC" id="3.2.1.4"/>
<dbReference type="EMBL" id="AC003672">
    <property type="protein sequence ID" value="AAC27458.1"/>
    <property type="molecule type" value="Genomic_DNA"/>
</dbReference>
<dbReference type="EMBL" id="AC004521">
    <property type="protein sequence ID" value="AAM14961.1"/>
    <property type="status" value="ALT_SEQ"/>
    <property type="molecule type" value="Genomic_DNA"/>
</dbReference>
<dbReference type="EMBL" id="CP002685">
    <property type="protein sequence ID" value="AEC10438.1"/>
    <property type="molecule type" value="Genomic_DNA"/>
</dbReference>
<dbReference type="EMBL" id="AK175889">
    <property type="protein sequence ID" value="BAD43652.1"/>
    <property type="molecule type" value="mRNA"/>
</dbReference>
<dbReference type="PIR" id="T01583">
    <property type="entry name" value="T01583"/>
</dbReference>
<dbReference type="RefSeq" id="NP_181984.1">
    <property type="nucleotide sequence ID" value="NM_130020.3"/>
</dbReference>
<dbReference type="SMR" id="Q8S8Q4"/>
<dbReference type="FunCoup" id="Q8S8Q4">
    <property type="interactions" value="205"/>
</dbReference>
<dbReference type="STRING" id="3702.Q8S8Q4"/>
<dbReference type="CAZy" id="GH9">
    <property type="family name" value="Glycoside Hydrolase Family 9"/>
</dbReference>
<dbReference type="GlyGen" id="Q8S8Q4">
    <property type="glycosylation" value="1 site"/>
</dbReference>
<dbReference type="PaxDb" id="3702-AT2G44560.1"/>
<dbReference type="ProteomicsDB" id="247266"/>
<dbReference type="EnsemblPlants" id="AT2G44560.1">
    <property type="protein sequence ID" value="AT2G44560.1"/>
    <property type="gene ID" value="AT2G44560"/>
</dbReference>
<dbReference type="GeneID" id="819064"/>
<dbReference type="Gramene" id="AT2G44560.1">
    <property type="protein sequence ID" value="AT2G44560.1"/>
    <property type="gene ID" value="AT2G44560"/>
</dbReference>
<dbReference type="KEGG" id="ath:AT2G44560"/>
<dbReference type="Araport" id="AT2G44560"/>
<dbReference type="TAIR" id="AT2G44560">
    <property type="gene designation" value="GH9B11"/>
</dbReference>
<dbReference type="eggNOG" id="ENOG502QRF6">
    <property type="taxonomic scope" value="Eukaryota"/>
</dbReference>
<dbReference type="HOGENOM" id="CLU_008926_1_4_1"/>
<dbReference type="InParanoid" id="Q8S8Q4"/>
<dbReference type="OMA" id="EEYICSC"/>
<dbReference type="PhylomeDB" id="Q8S8Q4"/>
<dbReference type="BioCyc" id="ARA:AT2G44560-MONOMER"/>
<dbReference type="PRO" id="PR:Q8S8Q4"/>
<dbReference type="Proteomes" id="UP000006548">
    <property type="component" value="Chromosome 2"/>
</dbReference>
<dbReference type="ExpressionAtlas" id="Q8S8Q4">
    <property type="expression patterns" value="baseline and differential"/>
</dbReference>
<dbReference type="GO" id="GO:0005576">
    <property type="term" value="C:extracellular region"/>
    <property type="evidence" value="ECO:0007669"/>
    <property type="project" value="UniProtKB-SubCell"/>
</dbReference>
<dbReference type="GO" id="GO:0008810">
    <property type="term" value="F:cellulase activity"/>
    <property type="evidence" value="ECO:0007669"/>
    <property type="project" value="UniProtKB-EC"/>
</dbReference>
<dbReference type="GO" id="GO:0071555">
    <property type="term" value="P:cell wall organization"/>
    <property type="evidence" value="ECO:0007669"/>
    <property type="project" value="UniProtKB-KW"/>
</dbReference>
<dbReference type="GO" id="GO:0030245">
    <property type="term" value="P:cellulose catabolic process"/>
    <property type="evidence" value="ECO:0007669"/>
    <property type="project" value="UniProtKB-KW"/>
</dbReference>
<dbReference type="FunFam" id="1.50.10.10:FF:000020">
    <property type="entry name" value="Endoglucanase"/>
    <property type="match status" value="1"/>
</dbReference>
<dbReference type="Gene3D" id="1.50.10.10">
    <property type="match status" value="1"/>
</dbReference>
<dbReference type="InterPro" id="IPR008928">
    <property type="entry name" value="6-hairpin_glycosidase_sf"/>
</dbReference>
<dbReference type="InterPro" id="IPR012341">
    <property type="entry name" value="6hp_glycosidase-like_sf"/>
</dbReference>
<dbReference type="InterPro" id="IPR001701">
    <property type="entry name" value="Glyco_hydro_9"/>
</dbReference>
<dbReference type="InterPro" id="IPR018221">
    <property type="entry name" value="Glyco_hydro_9_His_AS"/>
</dbReference>
<dbReference type="PANTHER" id="PTHR22298">
    <property type="entry name" value="ENDO-1,4-BETA-GLUCANASE"/>
    <property type="match status" value="1"/>
</dbReference>
<dbReference type="Pfam" id="PF00759">
    <property type="entry name" value="Glyco_hydro_9"/>
    <property type="match status" value="1"/>
</dbReference>
<dbReference type="SUPFAM" id="SSF48208">
    <property type="entry name" value="Six-hairpin glycosidases"/>
    <property type="match status" value="1"/>
</dbReference>
<dbReference type="PROSITE" id="PS60032">
    <property type="entry name" value="GH9_1"/>
    <property type="match status" value="1"/>
</dbReference>
<dbReference type="PROSITE" id="PS00592">
    <property type="entry name" value="GH9_2"/>
    <property type="match status" value="1"/>
</dbReference>
<sequence>MSQLKIGSSQCLWTSICIVLFVLSMARGAVSRNYGDALTKSLLYFEAQRSGKLPSNQRVTWRGDSALRDGSDAHVDLTGGYYDAGDNMKFGFPLAFFTTMLAWSNIEMATQLKAHQEQENALAALKWATDFLIKAHPEPNVLYGQVGDGNSDHECWMRPEDMTTPRPSFRIDAQHPGSDLAGETAAAMAAASIAFAPSDEAYAQILIGHAKELFEFAKAYPGIYQNSITNAGGFYASSGYEDELLWAAAWLHRATNDQIYLDYLTQASGTGGPRTAFSWDDKFVGAQVLVAKLALEGKVESNGKIAEYKSMAEQFICNCAQKGSNNVKKTPGGLLYFLPWNNLQYTTAATFVLSAYSKYLTDAKASIQCPNGALQASDLLDLARSQVDYILGSNPQNMSYMVGVGTNYPKKPHHRAASIVSITKDKTPVTCSEGFDAWFNNPAPNPNVLMGAVVGGPNDNDVYGDERTDYQHAEPAPATAAPFVGVLAAVA</sequence>
<protein>
    <recommendedName>
        <fullName>Endoglucanase 14</fullName>
        <ecNumber>3.2.1.4</ecNumber>
    </recommendedName>
    <alternativeName>
        <fullName>Endo-1,4-beta glucanase 14</fullName>
    </alternativeName>
</protein>
<accession>Q8S8Q4</accession>
<accession>O64891</accession>
<feature type="signal peptide" evidence="2">
    <location>
        <begin position="1"/>
        <end position="31"/>
    </location>
</feature>
<feature type="chain" id="PRO_0000249266" description="Endoglucanase 14">
    <location>
        <begin position="32"/>
        <end position="491"/>
    </location>
</feature>
<feature type="active site" description="Nucleophile" evidence="4">
    <location>
        <position position="86"/>
    </location>
</feature>
<feature type="active site" evidence="3">
    <location>
        <position position="413"/>
    </location>
</feature>
<feature type="active site" evidence="3">
    <location>
        <position position="465"/>
    </location>
</feature>
<feature type="active site" evidence="3">
    <location>
        <position position="474"/>
    </location>
</feature>
<feature type="glycosylation site" description="N-linked (GlcNAc...) asparagine" evidence="2">
    <location>
        <position position="397"/>
    </location>
</feature>
<name>GUN14_ARATH</name>